<name>PFA5_EMENI</name>
<accession>Q5B433</accession>
<accession>C8VAY0</accession>
<protein>
    <recommendedName>
        <fullName>Palmitoyltransferase pfa5</fullName>
        <ecNumber>2.3.1.225</ecNumber>
    </recommendedName>
    <alternativeName>
        <fullName>Protein fatty acyltransferase 5</fullName>
    </alternativeName>
</protein>
<feature type="chain" id="PRO_0000212978" description="Palmitoyltransferase pfa5">
    <location>
        <begin position="1"/>
        <end position="486"/>
    </location>
</feature>
<feature type="transmembrane region" description="Helical" evidence="2">
    <location>
        <begin position="12"/>
        <end position="32"/>
    </location>
</feature>
<feature type="transmembrane region" description="Helical" evidence="2">
    <location>
        <begin position="54"/>
        <end position="74"/>
    </location>
</feature>
<feature type="transmembrane region" description="Helical" evidence="2">
    <location>
        <begin position="217"/>
        <end position="237"/>
    </location>
</feature>
<feature type="transmembrane region" description="Helical" evidence="2">
    <location>
        <begin position="261"/>
        <end position="281"/>
    </location>
</feature>
<feature type="domain" description="DHHC" evidence="3">
    <location>
        <begin position="172"/>
        <end position="222"/>
    </location>
</feature>
<feature type="region of interest" description="Disordered" evidence="4">
    <location>
        <begin position="94"/>
        <end position="130"/>
    </location>
</feature>
<feature type="region of interest" description="Disordered" evidence="4">
    <location>
        <begin position="326"/>
        <end position="357"/>
    </location>
</feature>
<feature type="region of interest" description="Disordered" evidence="4">
    <location>
        <begin position="433"/>
        <end position="486"/>
    </location>
</feature>
<feature type="compositionally biased region" description="Basic residues" evidence="4">
    <location>
        <begin position="103"/>
        <end position="121"/>
    </location>
</feature>
<feature type="compositionally biased region" description="Low complexity" evidence="4">
    <location>
        <begin position="447"/>
        <end position="456"/>
    </location>
</feature>
<feature type="compositionally biased region" description="Basic residues" evidence="4">
    <location>
        <begin position="460"/>
        <end position="480"/>
    </location>
</feature>
<gene>
    <name type="primary">pfa5</name>
    <name type="ORF">AN4697</name>
</gene>
<organism>
    <name type="scientific">Emericella nidulans (strain FGSC A4 / ATCC 38163 / CBS 112.46 / NRRL 194 / M139)</name>
    <name type="common">Aspergillus nidulans</name>
    <dbReference type="NCBI Taxonomy" id="227321"/>
    <lineage>
        <taxon>Eukaryota</taxon>
        <taxon>Fungi</taxon>
        <taxon>Dikarya</taxon>
        <taxon>Ascomycota</taxon>
        <taxon>Pezizomycotina</taxon>
        <taxon>Eurotiomycetes</taxon>
        <taxon>Eurotiomycetidae</taxon>
        <taxon>Eurotiales</taxon>
        <taxon>Aspergillaceae</taxon>
        <taxon>Aspergillus</taxon>
        <taxon>Aspergillus subgen. Nidulantes</taxon>
    </lineage>
</organism>
<comment type="catalytic activity">
    <reaction>
        <text>L-cysteinyl-[protein] + hexadecanoyl-CoA = S-hexadecanoyl-L-cysteinyl-[protein] + CoA</text>
        <dbReference type="Rhea" id="RHEA:36683"/>
        <dbReference type="Rhea" id="RHEA-COMP:10131"/>
        <dbReference type="Rhea" id="RHEA-COMP:11032"/>
        <dbReference type="ChEBI" id="CHEBI:29950"/>
        <dbReference type="ChEBI" id="CHEBI:57287"/>
        <dbReference type="ChEBI" id="CHEBI:57379"/>
        <dbReference type="ChEBI" id="CHEBI:74151"/>
        <dbReference type="EC" id="2.3.1.225"/>
    </reaction>
</comment>
<comment type="subcellular location">
    <subcellularLocation>
        <location evidence="5">Membrane</location>
        <topology evidence="5">Multi-pass membrane protein</topology>
    </subcellularLocation>
</comment>
<comment type="domain">
    <text evidence="1">The DHHC domain is required for palmitoyltransferase activity.</text>
</comment>
<comment type="PTM">
    <text evidence="1">Autopalmitoylated.</text>
</comment>
<comment type="similarity">
    <text evidence="5">Belongs to the DHHC palmitoyltransferase family. PFA5 subfamily.</text>
</comment>
<comment type="sequence caution" evidence="5">
    <conflict type="erroneous gene model prediction">
        <sequence resource="EMBL-CDS" id="EAA60739"/>
    </conflict>
</comment>
<dbReference type="EC" id="2.3.1.225"/>
<dbReference type="EMBL" id="AACD01000080">
    <property type="protein sequence ID" value="EAA60739.1"/>
    <property type="status" value="ALT_SEQ"/>
    <property type="molecule type" value="Genomic_DNA"/>
</dbReference>
<dbReference type="EMBL" id="BN001303">
    <property type="protein sequence ID" value="CBF76977.1"/>
    <property type="molecule type" value="Genomic_DNA"/>
</dbReference>
<dbReference type="RefSeq" id="XP_662301.1">
    <property type="nucleotide sequence ID" value="XM_657209.1"/>
</dbReference>
<dbReference type="FunCoup" id="Q5B433">
    <property type="interactions" value="895"/>
</dbReference>
<dbReference type="STRING" id="227321.Q5B433"/>
<dbReference type="EnsemblFungi" id="CBF76977">
    <property type="protein sequence ID" value="CBF76977"/>
    <property type="gene ID" value="ANIA_04697"/>
</dbReference>
<dbReference type="VEuPathDB" id="FungiDB:AN4697"/>
<dbReference type="eggNOG" id="KOG1315">
    <property type="taxonomic scope" value="Eukaryota"/>
</dbReference>
<dbReference type="HOGENOM" id="CLU_034009_0_0_1"/>
<dbReference type="InParanoid" id="Q5B433"/>
<dbReference type="OMA" id="SFYTKDV"/>
<dbReference type="OrthoDB" id="331948at2759"/>
<dbReference type="Proteomes" id="UP000000560">
    <property type="component" value="Chromosome III"/>
</dbReference>
<dbReference type="GO" id="GO:0005783">
    <property type="term" value="C:endoplasmic reticulum"/>
    <property type="evidence" value="ECO:0000318"/>
    <property type="project" value="GO_Central"/>
</dbReference>
<dbReference type="GO" id="GO:0005794">
    <property type="term" value="C:Golgi apparatus"/>
    <property type="evidence" value="ECO:0000318"/>
    <property type="project" value="GO_Central"/>
</dbReference>
<dbReference type="GO" id="GO:0016020">
    <property type="term" value="C:membrane"/>
    <property type="evidence" value="ECO:0007669"/>
    <property type="project" value="UniProtKB-SubCell"/>
</dbReference>
<dbReference type="GO" id="GO:0019706">
    <property type="term" value="F:protein-cysteine S-palmitoyltransferase activity"/>
    <property type="evidence" value="ECO:0000318"/>
    <property type="project" value="GO_Central"/>
</dbReference>
<dbReference type="GO" id="GO:0006612">
    <property type="term" value="P:protein targeting to membrane"/>
    <property type="evidence" value="ECO:0000318"/>
    <property type="project" value="GO_Central"/>
</dbReference>
<dbReference type="InterPro" id="IPR001594">
    <property type="entry name" value="Palmitoyltrfase_DHHC"/>
</dbReference>
<dbReference type="InterPro" id="IPR039859">
    <property type="entry name" value="PFA4/ZDH16/20/ERF2-like"/>
</dbReference>
<dbReference type="PANTHER" id="PTHR22883:SF23">
    <property type="entry name" value="PALMITOYLTRANSFERASE ZDHHC6"/>
    <property type="match status" value="1"/>
</dbReference>
<dbReference type="PANTHER" id="PTHR22883">
    <property type="entry name" value="ZINC FINGER DHHC DOMAIN CONTAINING PROTEIN"/>
    <property type="match status" value="1"/>
</dbReference>
<dbReference type="Pfam" id="PF01529">
    <property type="entry name" value="DHHC"/>
    <property type="match status" value="1"/>
</dbReference>
<dbReference type="PROSITE" id="PS50216">
    <property type="entry name" value="DHHC"/>
    <property type="match status" value="1"/>
</dbReference>
<proteinExistence type="inferred from homology"/>
<evidence type="ECO:0000250" key="1"/>
<evidence type="ECO:0000255" key="2"/>
<evidence type="ECO:0000255" key="3">
    <source>
        <dbReference type="PROSITE-ProRule" id="PRU00067"/>
    </source>
</evidence>
<evidence type="ECO:0000256" key="4">
    <source>
        <dbReference type="SAM" id="MobiDB-lite"/>
    </source>
</evidence>
<evidence type="ECO:0000305" key="5"/>
<keyword id="KW-0012">Acyltransferase</keyword>
<keyword id="KW-0449">Lipoprotein</keyword>
<keyword id="KW-0472">Membrane</keyword>
<keyword id="KW-0564">Palmitate</keyword>
<keyword id="KW-1185">Reference proteome</keyword>
<keyword id="KW-0808">Transferase</keyword>
<keyword id="KW-0812">Transmembrane</keyword>
<keyword id="KW-1133">Transmembrane helix</keyword>
<reference key="1">
    <citation type="journal article" date="2005" name="Nature">
        <title>Sequencing of Aspergillus nidulans and comparative analysis with A. fumigatus and A. oryzae.</title>
        <authorList>
            <person name="Galagan J.E."/>
            <person name="Calvo S.E."/>
            <person name="Cuomo C."/>
            <person name="Ma L.-J."/>
            <person name="Wortman J.R."/>
            <person name="Batzoglou S."/>
            <person name="Lee S.-I."/>
            <person name="Bastuerkmen M."/>
            <person name="Spevak C.C."/>
            <person name="Clutterbuck J."/>
            <person name="Kapitonov V."/>
            <person name="Jurka J."/>
            <person name="Scazzocchio C."/>
            <person name="Farman M.L."/>
            <person name="Butler J."/>
            <person name="Purcell S."/>
            <person name="Harris S."/>
            <person name="Braus G.H."/>
            <person name="Draht O."/>
            <person name="Busch S."/>
            <person name="D'Enfert C."/>
            <person name="Bouchier C."/>
            <person name="Goldman G.H."/>
            <person name="Bell-Pedersen D."/>
            <person name="Griffiths-Jones S."/>
            <person name="Doonan J.H."/>
            <person name="Yu J."/>
            <person name="Vienken K."/>
            <person name="Pain A."/>
            <person name="Freitag M."/>
            <person name="Selker E.U."/>
            <person name="Archer D.B."/>
            <person name="Penalva M.A."/>
            <person name="Oakley B.R."/>
            <person name="Momany M."/>
            <person name="Tanaka T."/>
            <person name="Kumagai T."/>
            <person name="Asai K."/>
            <person name="Machida M."/>
            <person name="Nierman W.C."/>
            <person name="Denning D.W."/>
            <person name="Caddick M.X."/>
            <person name="Hynes M."/>
            <person name="Paoletti M."/>
            <person name="Fischer R."/>
            <person name="Miller B.L."/>
            <person name="Dyer P.S."/>
            <person name="Sachs M.S."/>
            <person name="Osmani S.A."/>
            <person name="Birren B.W."/>
        </authorList>
    </citation>
    <scope>NUCLEOTIDE SEQUENCE [LARGE SCALE GENOMIC DNA]</scope>
    <source>
        <strain>FGSC A4 / ATCC 38163 / CBS 112.46 / NRRL 194 / M139</strain>
    </source>
</reference>
<reference key="2">
    <citation type="journal article" date="2009" name="Fungal Genet. Biol.">
        <title>The 2008 update of the Aspergillus nidulans genome annotation: a community effort.</title>
        <authorList>
            <person name="Wortman J.R."/>
            <person name="Gilsenan J.M."/>
            <person name="Joardar V."/>
            <person name="Deegan J."/>
            <person name="Clutterbuck J."/>
            <person name="Andersen M.R."/>
            <person name="Archer D."/>
            <person name="Bencina M."/>
            <person name="Braus G."/>
            <person name="Coutinho P."/>
            <person name="von Dohren H."/>
            <person name="Doonan J."/>
            <person name="Driessen A.J."/>
            <person name="Durek P."/>
            <person name="Espeso E."/>
            <person name="Fekete E."/>
            <person name="Flipphi M."/>
            <person name="Estrada C.G."/>
            <person name="Geysens S."/>
            <person name="Goldman G."/>
            <person name="de Groot P.W."/>
            <person name="Hansen K."/>
            <person name="Harris S.D."/>
            <person name="Heinekamp T."/>
            <person name="Helmstaedt K."/>
            <person name="Henrissat B."/>
            <person name="Hofmann G."/>
            <person name="Homan T."/>
            <person name="Horio T."/>
            <person name="Horiuchi H."/>
            <person name="James S."/>
            <person name="Jones M."/>
            <person name="Karaffa L."/>
            <person name="Karanyi Z."/>
            <person name="Kato M."/>
            <person name="Keller N."/>
            <person name="Kelly D.E."/>
            <person name="Kiel J.A."/>
            <person name="Kim J.M."/>
            <person name="van der Klei I.J."/>
            <person name="Klis F.M."/>
            <person name="Kovalchuk A."/>
            <person name="Krasevec N."/>
            <person name="Kubicek C.P."/>
            <person name="Liu B."/>
            <person name="Maccabe A."/>
            <person name="Meyer V."/>
            <person name="Mirabito P."/>
            <person name="Miskei M."/>
            <person name="Mos M."/>
            <person name="Mullins J."/>
            <person name="Nelson D.R."/>
            <person name="Nielsen J."/>
            <person name="Oakley B.R."/>
            <person name="Osmani S.A."/>
            <person name="Pakula T."/>
            <person name="Paszewski A."/>
            <person name="Paulsen I."/>
            <person name="Pilsyk S."/>
            <person name="Pocsi I."/>
            <person name="Punt P.J."/>
            <person name="Ram A.F."/>
            <person name="Ren Q."/>
            <person name="Robellet X."/>
            <person name="Robson G."/>
            <person name="Seiboth B."/>
            <person name="van Solingen P."/>
            <person name="Specht T."/>
            <person name="Sun J."/>
            <person name="Taheri-Talesh N."/>
            <person name="Takeshita N."/>
            <person name="Ussery D."/>
            <person name="vanKuyk P.A."/>
            <person name="Visser H."/>
            <person name="van de Vondervoort P.J."/>
            <person name="de Vries R.P."/>
            <person name="Walton J."/>
            <person name="Xiang X."/>
            <person name="Xiong Y."/>
            <person name="Zeng A.P."/>
            <person name="Brandt B.W."/>
            <person name="Cornell M.J."/>
            <person name="van den Hondel C.A."/>
            <person name="Visser J."/>
            <person name="Oliver S.G."/>
            <person name="Turner G."/>
        </authorList>
    </citation>
    <scope>GENOME REANNOTATION</scope>
    <source>
        <strain>FGSC A4 / ATCC 38163 / CBS 112.46 / NRRL 194 / M139</strain>
    </source>
</reference>
<sequence length="486" mass="54292">MAGQPDRRINLAVARVIPVVLFGIIIYSCYVITKPLCIDYLIDPLPKYNRPSRVGAGAAILVVFYILLLFVIITYVRLLYTVVYNPDLLPRSQAADQQSTPAKRSKSRSRRKGHGHGHRKSKSDEVSDKPVSDVERALDYNAGPMVLPWDTAGLEYFYKKDVFVCQPDGRPIYCSKCCHYKPDRTHHCREVDRCVRKMDHFCPWVGGVVSETSFKFFIQFVFYTALFCMTVLIVCAIYTAELRQDVSLISGSRNMLIISRLVMLTLIGLSDSLQLAAFNLTTIENLNRRSAVWTLAIRVPNHMISRIQPGTRWAPTFRTITYPLPPVPPPLSGMPTQPATGEGDNPYSPPPVPSTDPSAEQHIFAILQTLPGENPFALGSPLKNLQQVLGHSIIDWLLPIKRSPCADHSSAESEFVMGPVVSRLKKEAGLESKDAAAGSITTKHKNSSYNSSPSAPADKRSKRKQKRGKHHHHHHHHRHSSTTGTT</sequence>